<gene>
    <name type="primary">SLC8A3</name>
    <name type="synonym">NCX3</name>
</gene>
<name>NAC3_HUMAN</name>
<organism>
    <name type="scientific">Homo sapiens</name>
    <name type="common">Human</name>
    <dbReference type="NCBI Taxonomy" id="9606"/>
    <lineage>
        <taxon>Eukaryota</taxon>
        <taxon>Metazoa</taxon>
        <taxon>Chordata</taxon>
        <taxon>Craniata</taxon>
        <taxon>Vertebrata</taxon>
        <taxon>Euteleostomi</taxon>
        <taxon>Mammalia</taxon>
        <taxon>Eutheria</taxon>
        <taxon>Euarchontoglires</taxon>
        <taxon>Primates</taxon>
        <taxon>Haplorrhini</taxon>
        <taxon>Catarrhini</taxon>
        <taxon>Hominidae</taxon>
        <taxon>Homo</taxon>
    </lineage>
</organism>
<accession>P57103</accession>
<accession>Q5K3P6</accession>
<accession>Q5K3P7</accession>
<accession>Q8IUE9</accession>
<accession>Q8IUF0</accession>
<accession>Q8NFI7</accession>
<accession>Q96QG1</accession>
<accession>Q96QG2</accession>
<comment type="function">
    <text evidence="3 7">Mediates the electrogenic exchange of Ca(2+) against Na(+) ions across the cell membrane, and thereby contributes to the regulation of cytoplasmic Ca(2+) levels and Ca(2+)-dependent cellular processes. Contributes to cellular Ca(2+) homeostasis in excitable cells, both in muscle and in brain. In a first phase, voltage-gated channels mediate the rapid increase of cytoplasmic Ca(2+) levels due to release of Ca(2+) stores from the endoplasmic reticulum. SLC8A3 mediates the export of Ca(2+) from the cell during the next phase, so that cytoplasmic Ca(2+) levels rapidly return to baseline. Contributes to Ca(2+) transport during excitation-contraction coupling in muscle. In neurons, contributes to the rapid decrease of cytoplasmic Ca(2+) levels back to baseline after neuronal activation, and thereby contributes to modulate synaptic plasticity, learning and memory (By similarity). Required for normal oligodendrocyte differentiation and for normal myelination (PubMed:21959935). Mediates Ca(2+) efflux from mitochondria and contributes to mitochondrial Ca(2+) ion homeostasis (By similarity).</text>
</comment>
<comment type="catalytic activity">
    <reaction evidence="3">
        <text>Ca(2+)(in) + 3 Na(+)(out) = Ca(2+)(out) + 3 Na(+)(in)</text>
        <dbReference type="Rhea" id="RHEA:69955"/>
        <dbReference type="ChEBI" id="CHEBI:29101"/>
        <dbReference type="ChEBI" id="CHEBI:29108"/>
    </reaction>
</comment>
<comment type="activity regulation">
    <text evidence="2">Calcium transport is down-regulated by Na(+) and stimulated by Ca(2+).</text>
</comment>
<comment type="subunit">
    <text evidence="3">Interacts with AKAP1.</text>
</comment>
<comment type="interaction">
    <interactant intactId="EBI-17459901">
        <id>P57103-7</id>
    </interactant>
    <interactant intactId="EBI-17458373">
        <id>P48165</id>
        <label>GJA8</label>
    </interactant>
    <organismsDiffer>false</organismsDiffer>
    <experiments>3</experiments>
</comment>
<comment type="subcellular location">
    <subcellularLocation>
        <location evidence="7">Cell membrane</location>
        <topology evidence="11">Multi-pass membrane protein</topology>
    </subcellularLocation>
    <subcellularLocation>
        <location evidence="2">Perikaryon</location>
    </subcellularLocation>
    <subcellularLocation>
        <location evidence="2">Cell projection</location>
        <location evidence="2">Dendrite</location>
    </subcellularLocation>
    <subcellularLocation>
        <location evidence="2">Cell projection</location>
        <location evidence="2">Dendritic spine</location>
    </subcellularLocation>
    <subcellularLocation>
        <location evidence="3">Cell membrane</location>
        <location evidence="3">Sarcolemma</location>
    </subcellularLocation>
    <subcellularLocation>
        <location evidence="3">Cytoplasm</location>
        <location evidence="3">Sarcoplasm</location>
    </subcellularLocation>
    <subcellularLocation>
        <location evidence="3">Cell junction</location>
    </subcellularLocation>
    <subcellularLocation>
        <location evidence="3">Mitochondrion outer membrane</location>
        <topology evidence="3">Multi-pass membrane protein</topology>
    </subcellularLocation>
    <subcellularLocation>
        <location evidence="7">Cytoplasm</location>
        <location evidence="7">Perinuclear region</location>
    </subcellularLocation>
    <subcellularLocation>
        <location evidence="12">Endoplasmic reticulum membrane</location>
        <topology evidence="3">Multi-pass membrane protein</topology>
    </subcellularLocation>
    <text evidence="3">Detected at neuromuscular junctions.</text>
</comment>
<comment type="alternative products">
    <event type="alternative splicing"/>
    <isoform>
        <id>P57103-1</id>
        <name>3</name>
        <name>NCX3.3</name>
        <sequence type="displayed"/>
    </isoform>
    <isoform>
        <id>P57103-2</id>
        <name>2</name>
        <name>NCX3.2</name>
        <sequence type="described" ref="VSP_008116"/>
    </isoform>
    <isoform>
        <id>P57103-3</id>
        <name>4</name>
        <name>NCX3.4</name>
        <sequence type="described" ref="VSP_008117 VSP_008118"/>
    </isoform>
    <isoform>
        <id>P57103-4</id>
        <name>5</name>
        <name>NCX3-tN.1</name>
        <sequence type="described" ref="VSP_043125"/>
    </isoform>
    <isoform>
        <id>P57103-5</id>
        <name>6</name>
        <name>NCX3-tN.2</name>
        <sequence type="described" ref="VSP_043126 VSP_008116"/>
    </isoform>
    <isoform>
        <id>P57103-6</id>
        <name>7</name>
        <sequence type="described" ref="VSP_043850"/>
    </isoform>
    <isoform>
        <id>P57103-7</id>
        <name>8</name>
        <sequence type="described" ref="VSP_044502"/>
    </isoform>
</comment>
<comment type="tissue specificity">
    <text evidence="5">Isoform 2 is expressed in brain and skeletal muscle. Isoform 3 is expressed in excitable cells of brain, retina and skeletal muscle. Isoform 4 is expressed in skeletal muscle.</text>
</comment>
<comment type="developmental stage">
    <text evidence="7">Up-regulated during in vitro differentiation of oligodendrocytes (at protein level). Up-regulated during in vitro differentiation of oligodendrocytes.</text>
</comment>
<comment type="domain">
    <text evidence="1">The cytoplasmic Calx-beta domains bind the regulatory Ca(2+). The first Calx-beta domain can bind up to four Ca(2+) ions. The second domain can bind another two Ca(2+) ions that are essential for calcium-regulated ion exchange.</text>
</comment>
<comment type="miscellaneous">
    <molecule>Isoform 4</molecule>
    <text evidence="11">May be produced at very low levels due to a premature stop codon in the mRNA, leading to nonsense-mediated mRNA decay.</text>
</comment>
<comment type="miscellaneous">
    <molecule>Isoform 5</molecule>
    <text evidence="11">Expressed in fetal brain.</text>
</comment>
<comment type="miscellaneous">
    <molecule>Isoform 6</molecule>
    <text evidence="11">Expressed in fetal brain.</text>
</comment>
<comment type="similarity">
    <text evidence="11">Belongs to the Ca(2+):cation antiporter (CaCA) (TC 2.A.19) family. SLC8 subfamily.</text>
</comment>
<evidence type="ECO:0000250" key="1">
    <source>
        <dbReference type="UniProtKB" id="P23685"/>
    </source>
</evidence>
<evidence type="ECO:0000250" key="2">
    <source>
        <dbReference type="UniProtKB" id="P70549"/>
    </source>
</evidence>
<evidence type="ECO:0000250" key="3">
    <source>
        <dbReference type="UniProtKB" id="S4R2P9"/>
    </source>
</evidence>
<evidence type="ECO:0000255" key="4"/>
<evidence type="ECO:0000269" key="5">
    <source>
    </source>
</evidence>
<evidence type="ECO:0000269" key="6">
    <source>
    </source>
</evidence>
<evidence type="ECO:0000269" key="7">
    <source>
    </source>
</evidence>
<evidence type="ECO:0000303" key="8">
    <source>
    </source>
</evidence>
<evidence type="ECO:0000303" key="9">
    <source>
    </source>
</evidence>
<evidence type="ECO:0000303" key="10">
    <source>
    </source>
</evidence>
<evidence type="ECO:0000305" key="11"/>
<evidence type="ECO:0000305" key="12">
    <source>
    </source>
</evidence>
<feature type="signal peptide" evidence="4">
    <location>
        <begin position="1"/>
        <end position="30"/>
    </location>
</feature>
<feature type="chain" id="PRO_0000019384" description="Sodium/calcium exchanger 3">
    <location>
        <begin position="31"/>
        <end position="927"/>
    </location>
</feature>
<feature type="topological domain" description="Extracellular" evidence="4">
    <location>
        <begin position="31"/>
        <end position="73"/>
    </location>
</feature>
<feature type="transmembrane region" description="Helical" evidence="4">
    <location>
        <begin position="74"/>
        <end position="94"/>
    </location>
</feature>
<feature type="topological domain" description="Cytoplasmic" evidence="4">
    <location>
        <begin position="95"/>
        <end position="147"/>
    </location>
</feature>
<feature type="transmembrane region" description="Helical" evidence="4">
    <location>
        <begin position="148"/>
        <end position="168"/>
    </location>
</feature>
<feature type="topological domain" description="Extracellular" evidence="4">
    <location>
        <position position="169"/>
    </location>
</feature>
<feature type="transmembrane region" description="Helical" evidence="4">
    <location>
        <begin position="170"/>
        <end position="190"/>
    </location>
</feature>
<feature type="topological domain" description="Cytoplasmic" evidence="4">
    <location>
        <begin position="191"/>
        <end position="202"/>
    </location>
</feature>
<feature type="transmembrane region" description="Helical" evidence="4">
    <location>
        <begin position="203"/>
        <end position="223"/>
    </location>
</feature>
<feature type="topological domain" description="Extracellular" evidence="4">
    <location>
        <begin position="224"/>
        <end position="230"/>
    </location>
</feature>
<feature type="transmembrane region" description="Helical" evidence="4">
    <location>
        <begin position="231"/>
        <end position="251"/>
    </location>
</feature>
<feature type="topological domain" description="Cytoplasmic" evidence="4">
    <location>
        <begin position="252"/>
        <end position="726"/>
    </location>
</feature>
<feature type="transmembrane region" description="Helical" evidence="4">
    <location>
        <begin position="727"/>
        <end position="747"/>
    </location>
</feature>
<feature type="topological domain" description="Extracellular" evidence="4">
    <location>
        <begin position="748"/>
        <end position="754"/>
    </location>
</feature>
<feature type="transmembrane region" description="Helical" evidence="4">
    <location>
        <begin position="755"/>
        <end position="775"/>
    </location>
</feature>
<feature type="topological domain" description="Cytoplasmic" evidence="4">
    <location>
        <begin position="776"/>
        <end position="778"/>
    </location>
</feature>
<feature type="transmembrane region" description="Helical" evidence="4">
    <location>
        <begin position="779"/>
        <end position="799"/>
    </location>
</feature>
<feature type="topological domain" description="Extracellular" evidence="4">
    <location>
        <begin position="800"/>
        <end position="828"/>
    </location>
</feature>
<feature type="transmembrane region" description="Helical" evidence="4">
    <location>
        <begin position="829"/>
        <end position="849"/>
    </location>
</feature>
<feature type="topological domain" description="Cytoplasmic" evidence="4">
    <location>
        <begin position="850"/>
        <end position="860"/>
    </location>
</feature>
<feature type="transmembrane region" description="Helical" evidence="4">
    <location>
        <begin position="861"/>
        <end position="881"/>
    </location>
</feature>
<feature type="topological domain" description="Extracellular" evidence="4">
    <location>
        <begin position="882"/>
        <end position="903"/>
    </location>
</feature>
<feature type="transmembrane region" description="Helical" evidence="4">
    <location>
        <begin position="904"/>
        <end position="924"/>
    </location>
</feature>
<feature type="topological domain" description="Cytoplasmic" evidence="4">
    <location>
        <begin position="925"/>
        <end position="927"/>
    </location>
</feature>
<feature type="repeat" description="Alpha-1">
    <location>
        <begin position="140"/>
        <end position="180"/>
    </location>
</feature>
<feature type="domain" description="Calx-beta 1">
    <location>
        <begin position="386"/>
        <end position="485"/>
    </location>
</feature>
<feature type="domain" description="Calx-beta 2">
    <location>
        <begin position="519"/>
        <end position="619"/>
    </location>
</feature>
<feature type="repeat" description="Alpha-2">
    <location>
        <begin position="796"/>
        <end position="832"/>
    </location>
</feature>
<feature type="region of interest" description="Putative calmodulin-binding region" evidence="1">
    <location>
        <begin position="253"/>
        <end position="272"/>
    </location>
</feature>
<feature type="binding site" evidence="1">
    <location>
        <position position="409"/>
    </location>
    <ligand>
        <name>Ca(2+)</name>
        <dbReference type="ChEBI" id="CHEBI:29108"/>
        <label>1</label>
    </ligand>
</feature>
<feature type="binding site" evidence="1">
    <location>
        <position position="409"/>
    </location>
    <ligand>
        <name>Ca(2+)</name>
        <dbReference type="ChEBI" id="CHEBI:29108"/>
        <label>2</label>
    </ligand>
</feature>
<feature type="binding site" evidence="1">
    <location>
        <position position="409"/>
    </location>
    <ligand>
        <name>Ca(2+)</name>
        <dbReference type="ChEBI" id="CHEBI:29108"/>
        <label>3</label>
    </ligand>
</feature>
<feature type="binding site" evidence="1">
    <location>
        <position position="445"/>
    </location>
    <ligand>
        <name>Ca(2+)</name>
        <dbReference type="ChEBI" id="CHEBI:29108"/>
        <label>1</label>
    </ligand>
</feature>
<feature type="binding site" evidence="1">
    <location>
        <position position="445"/>
    </location>
    <ligand>
        <name>Ca(2+)</name>
        <dbReference type="ChEBI" id="CHEBI:29108"/>
        <label>4</label>
    </ligand>
</feature>
<feature type="binding site" evidence="1">
    <location>
        <position position="470"/>
    </location>
    <ligand>
        <name>Ca(2+)</name>
        <dbReference type="ChEBI" id="CHEBI:29108"/>
        <label>2</label>
    </ligand>
</feature>
<feature type="binding site" evidence="1">
    <location>
        <position position="471"/>
    </location>
    <ligand>
        <name>Ca(2+)</name>
        <dbReference type="ChEBI" id="CHEBI:29108"/>
        <label>1</label>
    </ligand>
</feature>
<feature type="binding site" evidence="1">
    <location>
        <position position="471"/>
    </location>
    <ligand>
        <name>Ca(2+)</name>
        <dbReference type="ChEBI" id="CHEBI:29108"/>
        <label>2</label>
    </ligand>
</feature>
<feature type="binding site" evidence="1">
    <location>
        <position position="471"/>
    </location>
    <ligand>
        <name>Ca(2+)</name>
        <dbReference type="ChEBI" id="CHEBI:29108"/>
        <label>3</label>
    </ligand>
</feature>
<feature type="binding site" evidence="1">
    <location>
        <position position="471"/>
    </location>
    <ligand>
        <name>Ca(2+)</name>
        <dbReference type="ChEBI" id="CHEBI:29108"/>
        <label>4</label>
    </ligand>
</feature>
<feature type="binding site" evidence="1">
    <location>
        <position position="473"/>
    </location>
    <ligand>
        <name>Ca(2+)</name>
        <dbReference type="ChEBI" id="CHEBI:29108"/>
        <label>3</label>
    </ligand>
</feature>
<feature type="binding site" evidence="1">
    <location>
        <position position="475"/>
    </location>
    <ligand>
        <name>Ca(2+)</name>
        <dbReference type="ChEBI" id="CHEBI:29108"/>
        <label>1</label>
    </ligand>
</feature>
<feature type="binding site" evidence="1">
    <location>
        <position position="475"/>
    </location>
    <ligand>
        <name>Ca(2+)</name>
        <dbReference type="ChEBI" id="CHEBI:29108"/>
        <label>3</label>
    </ligand>
</feature>
<feature type="binding site" evidence="1">
    <location>
        <position position="475"/>
    </location>
    <ligand>
        <name>Ca(2+)</name>
        <dbReference type="ChEBI" id="CHEBI:29108"/>
        <label>4</label>
    </ligand>
</feature>
<feature type="binding site" evidence="1">
    <location>
        <position position="478"/>
    </location>
    <ligand>
        <name>Ca(2+)</name>
        <dbReference type="ChEBI" id="CHEBI:29108"/>
        <label>4</label>
    </ligand>
</feature>
<feature type="binding site" evidence="1">
    <location>
        <position position="525"/>
    </location>
    <ligand>
        <name>Ca(2+)</name>
        <dbReference type="ChEBI" id="CHEBI:29108"/>
        <label>3</label>
    </ligand>
</feature>
<feature type="binding site" evidence="1">
    <location>
        <position position="526"/>
    </location>
    <ligand>
        <name>Ca(2+)</name>
        <dbReference type="ChEBI" id="CHEBI:29108"/>
        <label>2</label>
    </ligand>
</feature>
<feature type="binding site" evidence="1">
    <location>
        <position position="527"/>
    </location>
    <ligand>
        <name>Ca(2+)</name>
        <dbReference type="ChEBI" id="CHEBI:29108"/>
        <label>2</label>
    </ligand>
</feature>
<feature type="binding site" evidence="1">
    <location>
        <position position="527"/>
    </location>
    <ligand>
        <name>Ca(2+)</name>
        <dbReference type="ChEBI" id="CHEBI:29108"/>
        <label>3</label>
    </ligand>
</feature>
<feature type="binding site" evidence="1">
    <location>
        <position position="543"/>
    </location>
    <ligand>
        <name>Ca(2+)</name>
        <dbReference type="ChEBI" id="CHEBI:29108"/>
        <label>5</label>
    </ligand>
</feature>
<feature type="binding site" evidence="1">
    <location>
        <position position="579"/>
    </location>
    <ligand>
        <name>Ca(2+)</name>
        <dbReference type="ChEBI" id="CHEBI:29108"/>
        <label>6</label>
    </ligand>
</feature>
<feature type="binding site" evidence="1">
    <location>
        <position position="606"/>
    </location>
    <ligand>
        <name>Ca(2+)</name>
        <dbReference type="ChEBI" id="CHEBI:29108"/>
        <label>6</label>
    </ligand>
</feature>
<feature type="binding site" evidence="1">
    <location>
        <position position="607"/>
    </location>
    <ligand>
        <name>Ca(2+)</name>
        <dbReference type="ChEBI" id="CHEBI:29108"/>
        <label>5</label>
    </ligand>
</feature>
<feature type="binding site" evidence="1">
    <location>
        <position position="607"/>
    </location>
    <ligand>
        <name>Ca(2+)</name>
        <dbReference type="ChEBI" id="CHEBI:29108"/>
        <label>6</label>
    </ligand>
</feature>
<feature type="binding site" evidence="1">
    <location>
        <position position="672"/>
    </location>
    <ligand>
        <name>Ca(2+)</name>
        <dbReference type="ChEBI" id="CHEBI:29108"/>
        <label>5</label>
    </ligand>
</feature>
<feature type="glycosylation site" description="N-linked (GlcNAc...) asparagine" evidence="4">
    <location>
        <position position="45"/>
    </location>
</feature>
<feature type="glycosylation site" description="N-linked (GlcNAc...) asparagine" evidence="4">
    <location>
        <position position="823"/>
    </location>
</feature>
<feature type="splice variant" id="VSP_043125" description="In isoform 5." evidence="10">
    <location>
        <begin position="1"/>
        <end position="643"/>
    </location>
</feature>
<feature type="splice variant" id="VSP_043126" description="In isoform 6." evidence="9 10">
    <location>
        <begin position="1"/>
        <end position="623"/>
    </location>
</feature>
<feature type="splice variant" id="VSP_008117" description="In isoform 4." evidence="8">
    <original>KTIRVKIVDEEEYERQENFFIALGE</original>
    <variation>CDRQEADYGRRGGQEDSRDGKASIG</variation>
    <location>
        <begin position="596"/>
        <end position="620"/>
    </location>
</feature>
<feature type="splice variant" id="VSP_044502" description="In isoform 8." evidence="8">
    <original>RVKIVDEEEYERQENFFIALGEPKWMERGISALLLSPDVT</original>
    <variation>HIKVIDDEAYEKNKNYFIEMMGPRMVDMSFQKALLLSP</variation>
    <location>
        <begin position="599"/>
        <end position="638"/>
    </location>
</feature>
<feature type="splice variant" id="VSP_008118" description="In isoform 4." evidence="8">
    <location>
        <begin position="621"/>
        <end position="927"/>
    </location>
</feature>
<feature type="splice variant" id="VSP_008116" description="In isoform 2 and isoform 6." evidence="8 9 10">
    <location>
        <begin position="630"/>
        <end position="635"/>
    </location>
</feature>
<feature type="splice variant" id="VSP_043850" description="In isoform 7." evidence="8">
    <location>
        <begin position="636"/>
        <end position="638"/>
    </location>
</feature>
<feature type="sequence variant" id="VAR_036463" description="In a breast cancer sample; somatic mutation." evidence="6">
    <original>E</original>
    <variation>Q</variation>
    <location>
        <position position="612"/>
    </location>
</feature>
<sequence length="927" mass="103010">MAWLRLQPLTSAFLHFGLVTFVLFLNGLRAEAGGSGDVPSTGQNNESCSGSSDCKEGVILPIWYPENPSLGDKIARVIVYFVALIYMFLGVSIIADRFMASIEVITSQEREVTIKKPNGETSTTTIRVWNETVSNLTLMALGSSAPEILLSLIEVCGHGFIAGDLGPSTIVGSAAFNMFIIIGICVYVIPDGETRKIKHLRVFFITAAWSIFAYIWLYMILAVFSPGVVQVWEGLLTLFFFPVCVLLAWVADKRLLFYKYMHKKYRTDKHRGIIIETEGDHPKGIEMDGKMMNSHFLDGNLVPLEGKEVDESRREMIRILKDLKQKHPEKDLDQLVEMANYYALSHQQKSRAFYRIQATRMMTGAGNILKKHAAEQAKKASSMSEVHTDEPEDFISKVFFDPCSYQCLENCGAVLLTVVRKGGDMSKTMYVDYKTEDGSANAGADYEFTEGTVVLKPGETQKEFSVGIIDDDIFEEDEHFFVRLSNVRIEEEQPEEGMPPAIFNSLPLPRAVLASPCVATVTILDDDHAGIFTFECDTIHVSESIGVMEVKVLRTSGARGTVIVPFRTVEGTAKGGGEDFEDTYGELEFKNDETVKTIRVKIVDEEEYERQENFFIALGEPKWMERGISALLLSPDVTDRKLTMEEEEAKRIAEMGKPVLGEHPKLEVIIEESYEFKTTVDKLIKKTNLALVVGTHSWRDQFMEAITVSAAGDEDEDESGEERLPSCFDYVMHFLTVFWKVLFACVPPTEYCHGWACFAVSILIIGMLTAIIGDLASHFGCTIGLKDSVTAVVFVAFGTSVPDTFASKAAALQDVYADASIGNVTGSNAVNVFLGIGLAWSVAAIYWALQGQEFHVSAGTLAFSVTLFTIFAFVCISVLLYRRRPHLGGELGGPRGCKLATTWLFVSLWLLYILFATLEAYCYIKGF</sequence>
<dbReference type="EMBL" id="AF510501">
    <property type="protein sequence ID" value="AAN60790.1"/>
    <property type="molecule type" value="mRNA"/>
</dbReference>
<dbReference type="EMBL" id="AF510502">
    <property type="protein sequence ID" value="AAN60791.1"/>
    <property type="molecule type" value="mRNA"/>
</dbReference>
<dbReference type="EMBL" id="AF510503">
    <property type="protein sequence ID" value="AAN60792.1"/>
    <property type="molecule type" value="mRNA"/>
</dbReference>
<dbReference type="EMBL" id="AF508982">
    <property type="protein sequence ID" value="AAM90955.1"/>
    <property type="molecule type" value="Genomic_DNA"/>
</dbReference>
<dbReference type="EMBL" id="AJ304852">
    <property type="protein sequence ID" value="CAC40984.1"/>
    <property type="molecule type" value="mRNA"/>
</dbReference>
<dbReference type="EMBL" id="AJ304853">
    <property type="protein sequence ID" value="CAC40985.1"/>
    <property type="molecule type" value="mRNA"/>
</dbReference>
<dbReference type="EMBL" id="AJ745101">
    <property type="protein sequence ID" value="CAG33739.1"/>
    <property type="molecule type" value="mRNA"/>
</dbReference>
<dbReference type="EMBL" id="AJ745102">
    <property type="protein sequence ID" value="CAG33740.1"/>
    <property type="molecule type" value="mRNA"/>
</dbReference>
<dbReference type="EMBL" id="AL135747">
    <property type="status" value="NOT_ANNOTATED_CDS"/>
    <property type="molecule type" value="Genomic_DNA"/>
</dbReference>
<dbReference type="EMBL" id="AL160191">
    <property type="status" value="NOT_ANNOTATED_CDS"/>
    <property type="molecule type" value="Genomic_DNA"/>
</dbReference>
<dbReference type="EMBL" id="CH471061">
    <property type="protein sequence ID" value="EAW81019.1"/>
    <property type="molecule type" value="Genomic_DNA"/>
</dbReference>
<dbReference type="EMBL" id="CH471061">
    <property type="protein sequence ID" value="EAW81021.1"/>
    <property type="molecule type" value="Genomic_DNA"/>
</dbReference>
<dbReference type="EMBL" id="CH471061">
    <property type="protein sequence ID" value="EAW81026.1"/>
    <property type="molecule type" value="Genomic_DNA"/>
</dbReference>
<dbReference type="EMBL" id="BC142969">
    <property type="protein sequence ID" value="AAI42970.1"/>
    <property type="molecule type" value="mRNA"/>
</dbReference>
<dbReference type="EMBL" id="X93017">
    <property type="status" value="NOT_ANNOTATED_CDS"/>
    <property type="molecule type" value="Genomic_DNA"/>
</dbReference>
<dbReference type="CCDS" id="CCDS35498.1">
    <molecule id="P57103-1"/>
</dbReference>
<dbReference type="CCDS" id="CCDS41967.1">
    <molecule id="P57103-4"/>
</dbReference>
<dbReference type="CCDS" id="CCDS45131.1">
    <molecule id="P57103-5"/>
</dbReference>
<dbReference type="CCDS" id="CCDS53904.1">
    <molecule id="P57103-6"/>
</dbReference>
<dbReference type="CCDS" id="CCDS9799.1">
    <molecule id="P57103-7"/>
</dbReference>
<dbReference type="CCDS" id="CCDS9800.1">
    <molecule id="P57103-2"/>
</dbReference>
<dbReference type="RefSeq" id="NP_001123889.1">
    <molecule id="P57103-5"/>
    <property type="nucleotide sequence ID" value="NM_001130417.3"/>
</dbReference>
<dbReference type="RefSeq" id="NP_150287.1">
    <molecule id="P57103-7"/>
    <property type="nucleotide sequence ID" value="NM_033262.5"/>
</dbReference>
<dbReference type="RefSeq" id="NP_489479.1">
    <molecule id="P57103-6"/>
    <property type="nucleotide sequence ID" value="NM_058240.4"/>
</dbReference>
<dbReference type="RefSeq" id="NP_891977.1">
    <molecule id="P57103-2"/>
    <property type="nucleotide sequence ID" value="NM_182932.3"/>
</dbReference>
<dbReference type="RefSeq" id="NP_891981.1">
    <molecule id="P57103-4"/>
    <property type="nucleotide sequence ID" value="NM_182936.3"/>
</dbReference>
<dbReference type="RefSeq" id="NP_892114.1">
    <molecule id="P57103-1"/>
    <property type="nucleotide sequence ID" value="NM_183002.3"/>
</dbReference>
<dbReference type="RefSeq" id="XP_016877095.1">
    <molecule id="P57103-1"/>
    <property type="nucleotide sequence ID" value="XM_017021606.2"/>
</dbReference>
<dbReference type="RefSeq" id="XP_016877097.1">
    <molecule id="P57103-2"/>
    <property type="nucleotide sequence ID" value="XM_017021608.2"/>
</dbReference>
<dbReference type="RefSeq" id="XP_054232601.1">
    <molecule id="P57103-1"/>
    <property type="nucleotide sequence ID" value="XM_054376626.1"/>
</dbReference>
<dbReference type="RefSeq" id="XP_054232603.1">
    <molecule id="P57103-2"/>
    <property type="nucleotide sequence ID" value="XM_054376628.1"/>
</dbReference>
<dbReference type="SMR" id="P57103"/>
<dbReference type="BioGRID" id="112437">
    <property type="interactions" value="12"/>
</dbReference>
<dbReference type="FunCoup" id="P57103">
    <property type="interactions" value="1348"/>
</dbReference>
<dbReference type="IntAct" id="P57103">
    <property type="interactions" value="9"/>
</dbReference>
<dbReference type="MINT" id="P57103"/>
<dbReference type="STRING" id="9606.ENSP00000370669"/>
<dbReference type="GuidetoPHARMACOLOGY" id="947"/>
<dbReference type="TCDB" id="2.A.19.3.3">
    <property type="family name" value="the ca(2+):cation antiporter (caca) family"/>
</dbReference>
<dbReference type="GlyCosmos" id="P57103">
    <property type="glycosylation" value="2 sites, No reported glycans"/>
</dbReference>
<dbReference type="GlyGen" id="P57103">
    <property type="glycosylation" value="3 sites, 1 O-linked glycan (1 site)"/>
</dbReference>
<dbReference type="iPTMnet" id="P57103"/>
<dbReference type="PhosphoSitePlus" id="P57103"/>
<dbReference type="BioMuta" id="SLC8A3"/>
<dbReference type="DMDM" id="34395973"/>
<dbReference type="MassIVE" id="P57103"/>
<dbReference type="PaxDb" id="9606-ENSP00000370669"/>
<dbReference type="PeptideAtlas" id="P57103"/>
<dbReference type="ProteomicsDB" id="56998">
    <molecule id="P57103-1"/>
</dbReference>
<dbReference type="ProteomicsDB" id="56999">
    <molecule id="P57103-2"/>
</dbReference>
<dbReference type="ProteomicsDB" id="57000">
    <molecule id="P57103-3"/>
</dbReference>
<dbReference type="ProteomicsDB" id="57002">
    <molecule id="P57103-5"/>
</dbReference>
<dbReference type="ProteomicsDB" id="57003">
    <molecule id="P57103-6"/>
</dbReference>
<dbReference type="ProteomicsDB" id="77876"/>
<dbReference type="TopDownProteomics" id="P57103-2">
    <molecule id="P57103-2"/>
</dbReference>
<dbReference type="Antibodypedia" id="12397">
    <property type="antibodies" value="150 antibodies from 24 providers"/>
</dbReference>
<dbReference type="DNASU" id="6547"/>
<dbReference type="Ensembl" id="ENST00000216568.11">
    <molecule id="P57103-5"/>
    <property type="protein sequence ID" value="ENSP00000216568.7"/>
    <property type="gene ID" value="ENSG00000100678.20"/>
</dbReference>
<dbReference type="Ensembl" id="ENST00000356921.7">
    <molecule id="P57103-2"/>
    <property type="protein sequence ID" value="ENSP00000349392.3"/>
    <property type="gene ID" value="ENSG00000100678.20"/>
</dbReference>
<dbReference type="Ensembl" id="ENST00000381269.6">
    <molecule id="P57103-1"/>
    <property type="protein sequence ID" value="ENSP00000370669.2"/>
    <property type="gene ID" value="ENSG00000100678.20"/>
</dbReference>
<dbReference type="Ensembl" id="ENST00000394330.6">
    <molecule id="P57103-4"/>
    <property type="protein sequence ID" value="ENSP00000377863.2"/>
    <property type="gene ID" value="ENSG00000100678.20"/>
</dbReference>
<dbReference type="Ensembl" id="ENST00000494208.5">
    <molecule id="P57103-3"/>
    <property type="protein sequence ID" value="ENSP00000436332.1"/>
    <property type="gene ID" value="ENSG00000100678.20"/>
</dbReference>
<dbReference type="Ensembl" id="ENST00000528359.6">
    <molecule id="P57103-7"/>
    <property type="protein sequence ID" value="ENSP00000433531.1"/>
    <property type="gene ID" value="ENSG00000100678.20"/>
</dbReference>
<dbReference type="Ensembl" id="ENST00000534137.5">
    <molecule id="P57103-6"/>
    <property type="protein sequence ID" value="ENSP00000436688.1"/>
    <property type="gene ID" value="ENSG00000100678.20"/>
</dbReference>
<dbReference type="Ensembl" id="ENST00000705391.1">
    <molecule id="P57103-2"/>
    <property type="protein sequence ID" value="ENSP00000516120.1"/>
    <property type="gene ID" value="ENSG00000100678.20"/>
</dbReference>
<dbReference type="GeneID" id="6547"/>
<dbReference type="KEGG" id="hsa:6547"/>
<dbReference type="MANE-Select" id="ENST00000356921.7">
    <molecule id="P57103-2"/>
    <property type="protein sequence ID" value="ENSP00000349392.3"/>
    <property type="RefSeq nucleotide sequence ID" value="NM_182932.3"/>
    <property type="RefSeq protein sequence ID" value="NP_891977.1"/>
</dbReference>
<dbReference type="UCSC" id="uc001xlu.5">
    <molecule id="P57103-1"/>
    <property type="organism name" value="human"/>
</dbReference>
<dbReference type="AGR" id="HGNC:11070"/>
<dbReference type="CTD" id="6547"/>
<dbReference type="DisGeNET" id="6547"/>
<dbReference type="GeneCards" id="SLC8A3"/>
<dbReference type="HGNC" id="HGNC:11070">
    <property type="gene designation" value="SLC8A3"/>
</dbReference>
<dbReference type="HPA" id="ENSG00000100678">
    <property type="expression patterns" value="Group enriched (brain, retina, skeletal muscle, tongue)"/>
</dbReference>
<dbReference type="MalaCards" id="SLC8A3"/>
<dbReference type="MIM" id="607991">
    <property type="type" value="gene"/>
</dbReference>
<dbReference type="neXtProt" id="NX_P57103"/>
<dbReference type="OpenTargets" id="ENSG00000100678"/>
<dbReference type="PharmGKB" id="PA315"/>
<dbReference type="VEuPathDB" id="HostDB:ENSG00000100678"/>
<dbReference type="eggNOG" id="KOG1306">
    <property type="taxonomic scope" value="Eukaryota"/>
</dbReference>
<dbReference type="GeneTree" id="ENSGT00940000157547"/>
<dbReference type="HOGENOM" id="CLU_012872_0_1_1"/>
<dbReference type="InParanoid" id="P57103"/>
<dbReference type="OMA" id="VEMANYH"/>
<dbReference type="OrthoDB" id="418484at2759"/>
<dbReference type="PAN-GO" id="P57103">
    <property type="GO annotations" value="7 GO annotations based on evolutionary models"/>
</dbReference>
<dbReference type="PhylomeDB" id="P57103"/>
<dbReference type="TreeFam" id="TF314308"/>
<dbReference type="PathwayCommons" id="P57103"/>
<dbReference type="Reactome" id="R-HSA-418359">
    <property type="pathway name" value="Reduction of cytosolic Ca++ levels"/>
</dbReference>
<dbReference type="Reactome" id="R-HSA-425561">
    <property type="pathway name" value="Sodium/Calcium exchangers"/>
</dbReference>
<dbReference type="Reactome" id="R-HSA-5578775">
    <property type="pathway name" value="Ion homeostasis"/>
</dbReference>
<dbReference type="Reactome" id="R-HSA-8949215">
    <property type="pathway name" value="Mitochondrial calcium ion transport"/>
</dbReference>
<dbReference type="SignaLink" id="P57103"/>
<dbReference type="BioGRID-ORCS" id="6547">
    <property type="hits" value="7 hits in 1147 CRISPR screens"/>
</dbReference>
<dbReference type="ChiTaRS" id="SLC8A3">
    <property type="organism name" value="human"/>
</dbReference>
<dbReference type="GenomeRNAi" id="6547"/>
<dbReference type="Pharos" id="P57103">
    <property type="development level" value="Tchem"/>
</dbReference>
<dbReference type="PRO" id="PR:P57103"/>
<dbReference type="Proteomes" id="UP000005640">
    <property type="component" value="Chromosome 14"/>
</dbReference>
<dbReference type="RNAct" id="P57103">
    <property type="molecule type" value="protein"/>
</dbReference>
<dbReference type="Bgee" id="ENSG00000100678">
    <property type="expression patterns" value="Expressed in tibia and 125 other cell types or tissues"/>
</dbReference>
<dbReference type="ExpressionAtlas" id="P57103">
    <property type="expression patterns" value="baseline and differential"/>
</dbReference>
<dbReference type="GO" id="GO:0070161">
    <property type="term" value="C:anchoring junction"/>
    <property type="evidence" value="ECO:0007669"/>
    <property type="project" value="UniProtKB-SubCell"/>
</dbReference>
<dbReference type="GO" id="GO:0030424">
    <property type="term" value="C:axon"/>
    <property type="evidence" value="ECO:0000250"/>
    <property type="project" value="ARUK-UCL"/>
</dbReference>
<dbReference type="GO" id="GO:0043679">
    <property type="term" value="C:axon terminus"/>
    <property type="evidence" value="ECO:0000250"/>
    <property type="project" value="ARUK-UCL"/>
</dbReference>
<dbReference type="GO" id="GO:0005813">
    <property type="term" value="C:centrosome"/>
    <property type="evidence" value="ECO:0000314"/>
    <property type="project" value="HPA"/>
</dbReference>
<dbReference type="GO" id="GO:0005829">
    <property type="term" value="C:cytosol"/>
    <property type="evidence" value="ECO:0000314"/>
    <property type="project" value="HPA"/>
</dbReference>
<dbReference type="GO" id="GO:0030425">
    <property type="term" value="C:dendrite"/>
    <property type="evidence" value="ECO:0000250"/>
    <property type="project" value="ARUK-UCL"/>
</dbReference>
<dbReference type="GO" id="GO:0043197">
    <property type="term" value="C:dendritic spine"/>
    <property type="evidence" value="ECO:0007669"/>
    <property type="project" value="UniProtKB-SubCell"/>
</dbReference>
<dbReference type="GO" id="GO:0005789">
    <property type="term" value="C:endoplasmic reticulum membrane"/>
    <property type="evidence" value="ECO:0000250"/>
    <property type="project" value="UniProtKB"/>
</dbReference>
<dbReference type="GO" id="GO:0005874">
    <property type="term" value="C:microtubule"/>
    <property type="evidence" value="ECO:0007669"/>
    <property type="project" value="Ensembl"/>
</dbReference>
<dbReference type="GO" id="GO:0015630">
    <property type="term" value="C:microtubule cytoskeleton"/>
    <property type="evidence" value="ECO:0000314"/>
    <property type="project" value="HPA"/>
</dbReference>
<dbReference type="GO" id="GO:0005741">
    <property type="term" value="C:mitochondrial outer membrane"/>
    <property type="evidence" value="ECO:0000250"/>
    <property type="project" value="UniProtKB"/>
</dbReference>
<dbReference type="GO" id="GO:0031594">
    <property type="term" value="C:neuromuscular junction"/>
    <property type="evidence" value="ECO:0000250"/>
    <property type="project" value="UniProtKB"/>
</dbReference>
<dbReference type="GO" id="GO:0043025">
    <property type="term" value="C:neuronal cell body"/>
    <property type="evidence" value="ECO:0000250"/>
    <property type="project" value="ARUK-UCL"/>
</dbReference>
<dbReference type="GO" id="GO:0005654">
    <property type="term" value="C:nucleoplasm"/>
    <property type="evidence" value="ECO:0000314"/>
    <property type="project" value="HPA"/>
</dbReference>
<dbReference type="GO" id="GO:0043204">
    <property type="term" value="C:perikaryon"/>
    <property type="evidence" value="ECO:0007669"/>
    <property type="project" value="UniProtKB-SubCell"/>
</dbReference>
<dbReference type="GO" id="GO:0048471">
    <property type="term" value="C:perinuclear region of cytoplasm"/>
    <property type="evidence" value="ECO:0000314"/>
    <property type="project" value="UniProtKB"/>
</dbReference>
<dbReference type="GO" id="GO:0005886">
    <property type="term" value="C:plasma membrane"/>
    <property type="evidence" value="ECO:0000314"/>
    <property type="project" value="UniProtKB"/>
</dbReference>
<dbReference type="GO" id="GO:0098794">
    <property type="term" value="C:postsynapse"/>
    <property type="evidence" value="ECO:0000318"/>
    <property type="project" value="GO_Central"/>
</dbReference>
<dbReference type="GO" id="GO:0014069">
    <property type="term" value="C:postsynaptic density"/>
    <property type="evidence" value="ECO:0000250"/>
    <property type="project" value="ARUK-UCL"/>
</dbReference>
<dbReference type="GO" id="GO:0045211">
    <property type="term" value="C:postsynaptic membrane"/>
    <property type="evidence" value="ECO:0007669"/>
    <property type="project" value="Ensembl"/>
</dbReference>
<dbReference type="GO" id="GO:0042383">
    <property type="term" value="C:sarcolemma"/>
    <property type="evidence" value="ECO:0000250"/>
    <property type="project" value="UniProtKB"/>
</dbReference>
<dbReference type="GO" id="GO:0016528">
    <property type="term" value="C:sarcoplasm"/>
    <property type="evidence" value="ECO:0007669"/>
    <property type="project" value="UniProtKB-SubCell"/>
</dbReference>
<dbReference type="GO" id="GO:0045202">
    <property type="term" value="C:synapse"/>
    <property type="evidence" value="ECO:0000314"/>
    <property type="project" value="ARUK-UCL"/>
</dbReference>
<dbReference type="GO" id="GO:1905060">
    <property type="term" value="F:calcium:monoatomic cation antiporter activity involved in regulation of postsynaptic cytosolic calcium ion concentration"/>
    <property type="evidence" value="ECO:0007669"/>
    <property type="project" value="Ensembl"/>
</dbReference>
<dbReference type="GO" id="GO:0005432">
    <property type="term" value="F:calcium:sodium antiporter activity"/>
    <property type="evidence" value="ECO:0000250"/>
    <property type="project" value="UniProtKB"/>
</dbReference>
<dbReference type="GO" id="GO:0005516">
    <property type="term" value="F:calmodulin binding"/>
    <property type="evidence" value="ECO:0007669"/>
    <property type="project" value="UniProtKB-KW"/>
</dbReference>
<dbReference type="GO" id="GO:0046872">
    <property type="term" value="F:metal ion binding"/>
    <property type="evidence" value="ECO:0007669"/>
    <property type="project" value="UniProtKB-KW"/>
</dbReference>
<dbReference type="GO" id="GO:1990034">
    <property type="term" value="P:calcium ion export across plasma membrane"/>
    <property type="evidence" value="ECO:0007669"/>
    <property type="project" value="Ensembl"/>
</dbReference>
<dbReference type="GO" id="GO:0098703">
    <property type="term" value="P:calcium ion import across plasma membrane"/>
    <property type="evidence" value="ECO:0000318"/>
    <property type="project" value="GO_Central"/>
</dbReference>
<dbReference type="GO" id="GO:0070588">
    <property type="term" value="P:calcium ion transmembrane transport"/>
    <property type="evidence" value="ECO:0000250"/>
    <property type="project" value="UniProtKB"/>
</dbReference>
<dbReference type="GO" id="GO:0060402">
    <property type="term" value="P:calcium ion transport into cytosol"/>
    <property type="evidence" value="ECO:0007669"/>
    <property type="project" value="Ensembl"/>
</dbReference>
<dbReference type="GO" id="GO:0007154">
    <property type="term" value="P:cell communication"/>
    <property type="evidence" value="ECO:0007669"/>
    <property type="project" value="InterPro"/>
</dbReference>
<dbReference type="GO" id="GO:0071320">
    <property type="term" value="P:cellular response to cAMP"/>
    <property type="evidence" value="ECO:0007669"/>
    <property type="project" value="Ensembl"/>
</dbReference>
<dbReference type="GO" id="GO:0071456">
    <property type="term" value="P:cellular response to hypoxia"/>
    <property type="evidence" value="ECO:0000250"/>
    <property type="project" value="UniProtKB"/>
</dbReference>
<dbReference type="GO" id="GO:0002244">
    <property type="term" value="P:hematopoietic progenitor cell differentiation"/>
    <property type="evidence" value="ECO:0007669"/>
    <property type="project" value="Ensembl"/>
</dbReference>
<dbReference type="GO" id="GO:0006874">
    <property type="term" value="P:intracellular calcium ion homeostasis"/>
    <property type="evidence" value="ECO:0000250"/>
    <property type="project" value="UniProtKB"/>
</dbReference>
<dbReference type="GO" id="GO:0007612">
    <property type="term" value="P:learning"/>
    <property type="evidence" value="ECO:0000250"/>
    <property type="project" value="UniProtKB"/>
</dbReference>
<dbReference type="GO" id="GO:0007611">
    <property type="term" value="P:learning or memory"/>
    <property type="evidence" value="ECO:0000250"/>
    <property type="project" value="ARUK-UCL"/>
</dbReference>
<dbReference type="GO" id="GO:0060291">
    <property type="term" value="P:long-term synaptic potentiation"/>
    <property type="evidence" value="ECO:0000250"/>
    <property type="project" value="UniProtKB"/>
</dbReference>
<dbReference type="GO" id="GO:0007613">
    <property type="term" value="P:memory"/>
    <property type="evidence" value="ECO:0000250"/>
    <property type="project" value="UniProtKB"/>
</dbReference>
<dbReference type="GO" id="GO:0051560">
    <property type="term" value="P:mitochondrial calcium ion homeostasis"/>
    <property type="evidence" value="ECO:0000250"/>
    <property type="project" value="UniProtKB"/>
</dbReference>
<dbReference type="GO" id="GO:0006851">
    <property type="term" value="P:mitochondrial calcium ion transmembrane transport"/>
    <property type="evidence" value="ECO:0000250"/>
    <property type="project" value="UniProtKB"/>
</dbReference>
<dbReference type="GO" id="GO:0098815">
    <property type="term" value="P:modulation of excitatory postsynaptic potential"/>
    <property type="evidence" value="ECO:0000250"/>
    <property type="project" value="ARUK-UCL"/>
</dbReference>
<dbReference type="GO" id="GO:0006811">
    <property type="term" value="P:monoatomic ion transport"/>
    <property type="evidence" value="ECO:0000304"/>
    <property type="project" value="Reactome"/>
</dbReference>
<dbReference type="GO" id="GO:0042552">
    <property type="term" value="P:myelination"/>
    <property type="evidence" value="ECO:0000250"/>
    <property type="project" value="UniProtKB"/>
</dbReference>
<dbReference type="GO" id="GO:1902532">
    <property type="term" value="P:negative regulation of intracellular signal transduction"/>
    <property type="evidence" value="ECO:0000250"/>
    <property type="project" value="ARUK-UCL"/>
</dbReference>
<dbReference type="GO" id="GO:0048709">
    <property type="term" value="P:oligodendrocyte differentiation"/>
    <property type="evidence" value="ECO:0000250"/>
    <property type="project" value="UniProtKB"/>
</dbReference>
<dbReference type="GO" id="GO:1903779">
    <property type="term" value="P:regulation of cardiac conduction"/>
    <property type="evidence" value="ECO:0000304"/>
    <property type="project" value="Reactome"/>
</dbReference>
<dbReference type="GO" id="GO:0014819">
    <property type="term" value="P:regulation of skeletal muscle contraction"/>
    <property type="evidence" value="ECO:0000250"/>
    <property type="project" value="UniProtKB"/>
</dbReference>
<dbReference type="GO" id="GO:0035725">
    <property type="term" value="P:sodium ion transmembrane transport"/>
    <property type="evidence" value="ECO:0000250"/>
    <property type="project" value="UniProtKB"/>
</dbReference>
<dbReference type="GO" id="GO:0050808">
    <property type="term" value="P:synapse organization"/>
    <property type="evidence" value="ECO:0000250"/>
    <property type="project" value="ARUK-UCL"/>
</dbReference>
<dbReference type="GO" id="GO:0021537">
    <property type="term" value="P:telencephalon development"/>
    <property type="evidence" value="ECO:0007669"/>
    <property type="project" value="Ensembl"/>
</dbReference>
<dbReference type="FunFam" id="1.20.1420.30:FF:000001">
    <property type="entry name" value="sodium/calcium exchanger 1 isoform X1"/>
    <property type="match status" value="1"/>
</dbReference>
<dbReference type="FunFam" id="1.20.1420.30:FF:000003">
    <property type="entry name" value="sodium/calcium exchanger 1 isoform X1"/>
    <property type="match status" value="1"/>
</dbReference>
<dbReference type="FunFam" id="2.60.40.2030:FF:000001">
    <property type="entry name" value="sodium/calcium exchanger 1 isoform X1"/>
    <property type="match status" value="1"/>
</dbReference>
<dbReference type="FunFam" id="2.60.40.2030:FF:000002">
    <property type="entry name" value="sodium/calcium exchanger 3 isoform X1"/>
    <property type="match status" value="1"/>
</dbReference>
<dbReference type="Gene3D" id="2.60.40.2030">
    <property type="match status" value="2"/>
</dbReference>
<dbReference type="Gene3D" id="1.20.1420.30">
    <property type="entry name" value="NCX, central ion-binding region"/>
    <property type="match status" value="2"/>
</dbReference>
<dbReference type="InterPro" id="IPR051171">
    <property type="entry name" value="CaCA"/>
</dbReference>
<dbReference type="InterPro" id="IPR038081">
    <property type="entry name" value="CalX-like_sf"/>
</dbReference>
<dbReference type="InterPro" id="IPR003644">
    <property type="entry name" value="Calx_beta"/>
</dbReference>
<dbReference type="InterPro" id="IPR004836">
    <property type="entry name" value="Na_Ca_Ex"/>
</dbReference>
<dbReference type="InterPro" id="IPR032452">
    <property type="entry name" value="Na_Ca_Ex_C-exten"/>
</dbReference>
<dbReference type="InterPro" id="IPR004837">
    <property type="entry name" value="NaCa_Exmemb"/>
</dbReference>
<dbReference type="InterPro" id="IPR044880">
    <property type="entry name" value="NCX_ion-bd_dom_sf"/>
</dbReference>
<dbReference type="NCBIfam" id="TIGR00845">
    <property type="entry name" value="caca"/>
    <property type="match status" value="1"/>
</dbReference>
<dbReference type="PANTHER" id="PTHR11878">
    <property type="entry name" value="SODIUM/CALCIUM EXCHANGER"/>
    <property type="match status" value="1"/>
</dbReference>
<dbReference type="PANTHER" id="PTHR11878:SF7">
    <property type="entry name" value="SODIUM_CALCIUM EXCHANGER 3"/>
    <property type="match status" value="1"/>
</dbReference>
<dbReference type="Pfam" id="PF03160">
    <property type="entry name" value="Calx-beta"/>
    <property type="match status" value="1"/>
</dbReference>
<dbReference type="Pfam" id="PF01699">
    <property type="entry name" value="Na_Ca_ex"/>
    <property type="match status" value="2"/>
</dbReference>
<dbReference type="Pfam" id="PF16494">
    <property type="entry name" value="Na_Ca_ex_C"/>
    <property type="match status" value="1"/>
</dbReference>
<dbReference type="PRINTS" id="PR01259">
    <property type="entry name" value="NACAEXCHNGR"/>
</dbReference>
<dbReference type="SMART" id="SM00237">
    <property type="entry name" value="Calx_beta"/>
    <property type="match status" value="2"/>
</dbReference>
<dbReference type="SUPFAM" id="SSF141072">
    <property type="entry name" value="CalX-like"/>
    <property type="match status" value="2"/>
</dbReference>
<keyword id="KW-0025">Alternative splicing</keyword>
<keyword id="KW-0050">Antiport</keyword>
<keyword id="KW-0106">Calcium</keyword>
<keyword id="KW-0109">Calcium transport</keyword>
<keyword id="KW-0112">Calmodulin-binding</keyword>
<keyword id="KW-0965">Cell junction</keyword>
<keyword id="KW-1003">Cell membrane</keyword>
<keyword id="KW-0966">Cell projection</keyword>
<keyword id="KW-0963">Cytoplasm</keyword>
<keyword id="KW-0256">Endoplasmic reticulum</keyword>
<keyword id="KW-0325">Glycoprotein</keyword>
<keyword id="KW-0406">Ion transport</keyword>
<keyword id="KW-0472">Membrane</keyword>
<keyword id="KW-0479">Metal-binding</keyword>
<keyword id="KW-0496">Mitochondrion</keyword>
<keyword id="KW-1000">Mitochondrion outer membrane</keyword>
<keyword id="KW-1267">Proteomics identification</keyword>
<keyword id="KW-1185">Reference proteome</keyword>
<keyword id="KW-0677">Repeat</keyword>
<keyword id="KW-0732">Signal</keyword>
<keyword id="KW-0915">Sodium</keyword>
<keyword id="KW-0739">Sodium transport</keyword>
<keyword id="KW-0770">Synapse</keyword>
<keyword id="KW-0812">Transmembrane</keyword>
<keyword id="KW-1133">Transmembrane helix</keyword>
<keyword id="KW-0813">Transport</keyword>
<reference key="1">
    <citation type="journal article" date="2002" name="Gene">
        <title>The human SLC8A3 gene and the tissue-specific Na+/Ca2+ exchanger 3 isoforms.</title>
        <authorList>
            <person name="Gabellini N."/>
            <person name="Bortoluzzi S."/>
            <person name="Danieli G.A."/>
            <person name="Carafoli E."/>
        </authorList>
    </citation>
    <scope>NUCLEOTIDE SEQUENCE [GENOMIC DNA / MRNA] (ISOFORMS 2; 3; 4; 7 AND 8)</scope>
</reference>
<reference key="2">
    <citation type="journal article" date="2003" name="J. Neurochem.">
        <title>Control of the Na+/Ca2+ exchanger 3 promoter by cyclic adenosine monophosphate and Ca2+ in differentiating neurons.</title>
        <authorList>
            <person name="Gabellini N."/>
            <person name="Bortoluzzi S."/>
            <person name="Danieli G.A."/>
            <person name="Carafoli E."/>
        </authorList>
    </citation>
    <scope>NUCLEOTIDE SEQUENCE [GENOMIC DNA] (ISOFORM 3)</scope>
</reference>
<reference key="3">
    <citation type="journal article" date="2005" name="Gene">
        <title>Molecular cloning and characterization of two novel truncated isoforms of human Na+/Ca2+ exchanger 3, expressed in fetal brain.</title>
        <authorList>
            <person name="Lindgren R.M."/>
            <person name="Zhao J."/>
            <person name="Heller S."/>
            <person name="Berglind H."/>
            <person name="Nister M."/>
        </authorList>
    </citation>
    <scope>NUCLEOTIDE SEQUENCE [MRNA] (ISOFORMS 5 AND 6)</scope>
    <scope>TISSUE SPECIFICITY</scope>
    <source>
        <tissue>Brain</tissue>
    </source>
</reference>
<reference key="4">
    <citation type="journal article" date="2003" name="Nature">
        <title>The DNA sequence and analysis of human chromosome 14.</title>
        <authorList>
            <person name="Heilig R."/>
            <person name="Eckenberg R."/>
            <person name="Petit J.-L."/>
            <person name="Fonknechten N."/>
            <person name="Da Silva C."/>
            <person name="Cattolico L."/>
            <person name="Levy M."/>
            <person name="Barbe V."/>
            <person name="De Berardinis V."/>
            <person name="Ureta-Vidal A."/>
            <person name="Pelletier E."/>
            <person name="Vico V."/>
            <person name="Anthouard V."/>
            <person name="Rowen L."/>
            <person name="Madan A."/>
            <person name="Qin S."/>
            <person name="Sun H."/>
            <person name="Du H."/>
            <person name="Pepin K."/>
            <person name="Artiguenave F."/>
            <person name="Robert C."/>
            <person name="Cruaud C."/>
            <person name="Bruels T."/>
            <person name="Jaillon O."/>
            <person name="Friedlander L."/>
            <person name="Samson G."/>
            <person name="Brottier P."/>
            <person name="Cure S."/>
            <person name="Segurens B."/>
            <person name="Aniere F."/>
            <person name="Samain S."/>
            <person name="Crespeau H."/>
            <person name="Abbasi N."/>
            <person name="Aiach N."/>
            <person name="Boscus D."/>
            <person name="Dickhoff R."/>
            <person name="Dors M."/>
            <person name="Dubois I."/>
            <person name="Friedman C."/>
            <person name="Gouyvenoux M."/>
            <person name="James R."/>
            <person name="Madan A."/>
            <person name="Mairey-Estrada B."/>
            <person name="Mangenot S."/>
            <person name="Martins N."/>
            <person name="Menard M."/>
            <person name="Oztas S."/>
            <person name="Ratcliffe A."/>
            <person name="Shaffer T."/>
            <person name="Trask B."/>
            <person name="Vacherie B."/>
            <person name="Bellemere C."/>
            <person name="Belser C."/>
            <person name="Besnard-Gonnet M."/>
            <person name="Bartol-Mavel D."/>
            <person name="Boutard M."/>
            <person name="Briez-Silla S."/>
            <person name="Combette S."/>
            <person name="Dufosse-Laurent V."/>
            <person name="Ferron C."/>
            <person name="Lechaplais C."/>
            <person name="Louesse C."/>
            <person name="Muselet D."/>
            <person name="Magdelenat G."/>
            <person name="Pateau E."/>
            <person name="Petit E."/>
            <person name="Sirvain-Trukniewicz P."/>
            <person name="Trybou A."/>
            <person name="Vega-Czarny N."/>
            <person name="Bataille E."/>
            <person name="Bluet E."/>
            <person name="Bordelais I."/>
            <person name="Dubois M."/>
            <person name="Dumont C."/>
            <person name="Guerin T."/>
            <person name="Haffray S."/>
            <person name="Hammadi R."/>
            <person name="Muanga J."/>
            <person name="Pellouin V."/>
            <person name="Robert D."/>
            <person name="Wunderle E."/>
            <person name="Gauguet G."/>
            <person name="Roy A."/>
            <person name="Sainte-Marthe L."/>
            <person name="Verdier J."/>
            <person name="Verdier-Discala C."/>
            <person name="Hillier L.W."/>
            <person name="Fulton L."/>
            <person name="McPherson J."/>
            <person name="Matsuda F."/>
            <person name="Wilson R."/>
            <person name="Scarpelli C."/>
            <person name="Gyapay G."/>
            <person name="Wincker P."/>
            <person name="Saurin W."/>
            <person name="Quetier F."/>
            <person name="Waterston R."/>
            <person name="Hood L."/>
            <person name="Weissenbach J."/>
        </authorList>
    </citation>
    <scope>NUCLEOTIDE SEQUENCE [LARGE SCALE GENOMIC DNA]</scope>
</reference>
<reference key="5">
    <citation type="submission" date="2005-07" db="EMBL/GenBank/DDBJ databases">
        <authorList>
            <person name="Mural R.J."/>
            <person name="Istrail S."/>
            <person name="Sutton G."/>
            <person name="Florea L."/>
            <person name="Halpern A.L."/>
            <person name="Mobarry C.M."/>
            <person name="Lippert R."/>
            <person name="Walenz B."/>
            <person name="Shatkay H."/>
            <person name="Dew I."/>
            <person name="Miller J.R."/>
            <person name="Flanigan M.J."/>
            <person name="Edwards N.J."/>
            <person name="Bolanos R."/>
            <person name="Fasulo D."/>
            <person name="Halldorsson B.V."/>
            <person name="Hannenhalli S."/>
            <person name="Turner R."/>
            <person name="Yooseph S."/>
            <person name="Lu F."/>
            <person name="Nusskern D.R."/>
            <person name="Shue B.C."/>
            <person name="Zheng X.H."/>
            <person name="Zhong F."/>
            <person name="Delcher A.L."/>
            <person name="Huson D.H."/>
            <person name="Kravitz S.A."/>
            <person name="Mouchard L."/>
            <person name="Reinert K."/>
            <person name="Remington K.A."/>
            <person name="Clark A.G."/>
            <person name="Waterman M.S."/>
            <person name="Eichler E.E."/>
            <person name="Adams M.D."/>
            <person name="Hunkapiller M.W."/>
            <person name="Myers E.W."/>
            <person name="Venter J.C."/>
        </authorList>
    </citation>
    <scope>NUCLEOTIDE SEQUENCE [LARGE SCALE GENOMIC DNA]</scope>
</reference>
<reference key="6">
    <citation type="journal article" date="2004" name="Genome Res.">
        <title>The status, quality, and expansion of the NIH full-length cDNA project: the Mammalian Gene Collection (MGC).</title>
        <authorList>
            <consortium name="The MGC Project Team"/>
        </authorList>
    </citation>
    <scope>NUCLEOTIDE SEQUENCE [LARGE SCALE MRNA] (ISOFORM 6)</scope>
</reference>
<reference key="7">
    <citation type="submission" date="1995-11" db="EMBL/GenBank/DDBJ databases">
        <title>The organization of the human gene of the sodium-calcium exchanger.</title>
        <authorList>
            <person name="Kraev A.S."/>
            <person name="Chumakov I.M."/>
            <person name="Carafoli E."/>
        </authorList>
    </citation>
    <scope>NUCLEOTIDE SEQUENCE [GENOMIC DNA] OF 1-595</scope>
</reference>
<reference key="8">
    <citation type="journal article" date="2012" name="Cell Death Differ.">
        <title>Silencing or knocking out the Na(+)/Ca(2+) exchanger-3 (NCX3) impairs oligodendrocyte differentiation.</title>
        <authorList>
            <person name="Boscia F."/>
            <person name="D'Avanzo C."/>
            <person name="Pannaccione A."/>
            <person name="Secondo A."/>
            <person name="Casamassa A."/>
            <person name="Formisano L."/>
            <person name="Guida N."/>
            <person name="Sokolow S."/>
            <person name="Herchuelz A."/>
            <person name="Annunziato L."/>
        </authorList>
    </citation>
    <scope>FUNCTION</scope>
    <scope>SUBCELLULAR LOCATION</scope>
    <scope>DEVELOPMENTAL STAGE</scope>
</reference>
<reference key="9">
    <citation type="journal article" date="2013" name="Mol. Aspects Med.">
        <title>The SLC8 gene family of sodium-calcium exchangers (NCX) - structure, function, and regulation in health and disease.</title>
        <authorList>
            <person name="Khananshvili D."/>
        </authorList>
    </citation>
    <scope>REVIEW</scope>
</reference>
<reference key="10">
    <citation type="journal article" date="2006" name="Science">
        <title>The consensus coding sequences of human breast and colorectal cancers.</title>
        <authorList>
            <person name="Sjoeblom T."/>
            <person name="Jones S."/>
            <person name="Wood L.D."/>
            <person name="Parsons D.W."/>
            <person name="Lin J."/>
            <person name="Barber T.D."/>
            <person name="Mandelker D."/>
            <person name="Leary R.J."/>
            <person name="Ptak J."/>
            <person name="Silliman N."/>
            <person name="Szabo S."/>
            <person name="Buckhaults P."/>
            <person name="Farrell C."/>
            <person name="Meeh P."/>
            <person name="Markowitz S.D."/>
            <person name="Willis J."/>
            <person name="Dawson D."/>
            <person name="Willson J.K.V."/>
            <person name="Gazdar A.F."/>
            <person name="Hartigan J."/>
            <person name="Wu L."/>
            <person name="Liu C."/>
            <person name="Parmigiani G."/>
            <person name="Park B.H."/>
            <person name="Bachman K.E."/>
            <person name="Papadopoulos N."/>
            <person name="Vogelstein B."/>
            <person name="Kinzler K.W."/>
            <person name="Velculescu V.E."/>
        </authorList>
    </citation>
    <scope>VARIANT [LARGE SCALE ANALYSIS] GLN-612</scope>
</reference>
<protein>
    <recommendedName>
        <fullName>Sodium/calcium exchanger 3</fullName>
    </recommendedName>
    <alternativeName>
        <fullName>Na(+)/Ca(2+)-exchange protein 3</fullName>
    </alternativeName>
    <alternativeName>
        <fullName>Solute carrier family 8 member 3</fullName>
    </alternativeName>
</protein>
<proteinExistence type="evidence at protein level"/>